<reference key="1">
    <citation type="journal article" date="2004" name="Nature">
        <title>Genome sequence of Silicibacter pomeroyi reveals adaptations to the marine environment.</title>
        <authorList>
            <person name="Moran M.A."/>
            <person name="Buchan A."/>
            <person name="Gonzalez J.M."/>
            <person name="Heidelberg J.F."/>
            <person name="Whitman W.B."/>
            <person name="Kiene R.P."/>
            <person name="Henriksen J.R."/>
            <person name="King G.M."/>
            <person name="Belas R."/>
            <person name="Fuqua C."/>
            <person name="Brinkac L.M."/>
            <person name="Lewis M."/>
            <person name="Johri S."/>
            <person name="Weaver B."/>
            <person name="Pai G."/>
            <person name="Eisen J.A."/>
            <person name="Rahe E."/>
            <person name="Sheldon W.M."/>
            <person name="Ye W."/>
            <person name="Miller T.R."/>
            <person name="Carlton J."/>
            <person name="Rasko D.A."/>
            <person name="Paulsen I.T."/>
            <person name="Ren Q."/>
            <person name="Daugherty S.C."/>
            <person name="DeBoy R.T."/>
            <person name="Dodson R.J."/>
            <person name="Durkin A.S."/>
            <person name="Madupu R."/>
            <person name="Nelson W.C."/>
            <person name="Sullivan S.A."/>
            <person name="Rosovitz M.J."/>
            <person name="Haft D.H."/>
            <person name="Selengut J."/>
            <person name="Ward N."/>
        </authorList>
    </citation>
    <scope>NUCLEOTIDE SEQUENCE [LARGE SCALE GENOMIC DNA]</scope>
    <source>
        <strain>ATCC 700808 / DSM 15171 / DSS-3</strain>
    </source>
</reference>
<reference key="2">
    <citation type="journal article" date="2014" name="Stand. Genomic Sci.">
        <title>An updated genome annotation for the model marine bacterium Ruegeria pomeroyi DSS-3.</title>
        <authorList>
            <person name="Rivers A.R."/>
            <person name="Smith C.B."/>
            <person name="Moran M.A."/>
        </authorList>
    </citation>
    <scope>GENOME REANNOTATION</scope>
    <source>
        <strain>ATCC 700808 / DSM 15171 / DSS-3</strain>
    </source>
</reference>
<protein>
    <recommendedName>
        <fullName evidence="1">Probable GTP-binding protein EngB</fullName>
    </recommendedName>
</protein>
<accession>Q5LW13</accession>
<evidence type="ECO:0000255" key="1">
    <source>
        <dbReference type="HAMAP-Rule" id="MF_00321"/>
    </source>
</evidence>
<name>ENGB_RUEPO</name>
<sequence length="217" mass="23411">MTALPFPVAEEPDAFTAETGRKLFAGPSEFVKGVVAMSGLPPADRVEVCFAGRSNVGKSSLINALTGTKGLARASNTPGRTQEINFFTQGPELYLVDLPGYGYANAPLKVVEKWQKLLKQYLSGRQTLRRAFVLIDARHGVKAVDDEIMKLLDTSAVTFQCVLTKADKVKAAERDKVLAQVRAALAKHPAAYPEIVLTSSEKGDGIATLRSIIAHLE</sequence>
<gene>
    <name evidence="1" type="primary">engB</name>
    <name type="ordered locus">SPO0530</name>
</gene>
<keyword id="KW-0131">Cell cycle</keyword>
<keyword id="KW-0132">Cell division</keyword>
<keyword id="KW-0342">GTP-binding</keyword>
<keyword id="KW-0460">Magnesium</keyword>
<keyword id="KW-0479">Metal-binding</keyword>
<keyword id="KW-0547">Nucleotide-binding</keyword>
<keyword id="KW-1185">Reference proteome</keyword>
<keyword id="KW-0717">Septation</keyword>
<organism>
    <name type="scientific">Ruegeria pomeroyi (strain ATCC 700808 / DSM 15171 / DSS-3)</name>
    <name type="common">Silicibacter pomeroyi</name>
    <dbReference type="NCBI Taxonomy" id="246200"/>
    <lineage>
        <taxon>Bacteria</taxon>
        <taxon>Pseudomonadati</taxon>
        <taxon>Pseudomonadota</taxon>
        <taxon>Alphaproteobacteria</taxon>
        <taxon>Rhodobacterales</taxon>
        <taxon>Roseobacteraceae</taxon>
        <taxon>Ruegeria</taxon>
    </lineage>
</organism>
<proteinExistence type="inferred from homology"/>
<comment type="function">
    <text evidence="1">Necessary for normal cell division and for the maintenance of normal septation.</text>
</comment>
<comment type="cofactor">
    <cofactor evidence="1">
        <name>Mg(2+)</name>
        <dbReference type="ChEBI" id="CHEBI:18420"/>
    </cofactor>
</comment>
<comment type="similarity">
    <text evidence="1">Belongs to the TRAFAC class TrmE-Era-EngA-EngB-Septin-like GTPase superfamily. EngB GTPase family.</text>
</comment>
<feature type="chain" id="PRO_0000266951" description="Probable GTP-binding protein EngB">
    <location>
        <begin position="1"/>
        <end position="217"/>
    </location>
</feature>
<feature type="domain" description="EngB-type G" evidence="1">
    <location>
        <begin position="44"/>
        <end position="217"/>
    </location>
</feature>
<feature type="binding site" evidence="1">
    <location>
        <begin position="52"/>
        <end position="59"/>
    </location>
    <ligand>
        <name>GTP</name>
        <dbReference type="ChEBI" id="CHEBI:37565"/>
    </ligand>
</feature>
<feature type="binding site" evidence="1">
    <location>
        <position position="59"/>
    </location>
    <ligand>
        <name>Mg(2+)</name>
        <dbReference type="ChEBI" id="CHEBI:18420"/>
    </ligand>
</feature>
<feature type="binding site" evidence="1">
    <location>
        <begin position="79"/>
        <end position="83"/>
    </location>
    <ligand>
        <name>GTP</name>
        <dbReference type="ChEBI" id="CHEBI:37565"/>
    </ligand>
</feature>
<feature type="binding site" evidence="1">
    <location>
        <position position="81"/>
    </location>
    <ligand>
        <name>Mg(2+)</name>
        <dbReference type="ChEBI" id="CHEBI:18420"/>
    </ligand>
</feature>
<feature type="binding site" evidence="1">
    <location>
        <begin position="97"/>
        <end position="100"/>
    </location>
    <ligand>
        <name>GTP</name>
        <dbReference type="ChEBI" id="CHEBI:37565"/>
    </ligand>
</feature>
<feature type="binding site" evidence="1">
    <location>
        <begin position="164"/>
        <end position="167"/>
    </location>
    <ligand>
        <name>GTP</name>
        <dbReference type="ChEBI" id="CHEBI:37565"/>
    </ligand>
</feature>
<feature type="binding site" evidence="1">
    <location>
        <begin position="198"/>
        <end position="200"/>
    </location>
    <ligand>
        <name>GTP</name>
        <dbReference type="ChEBI" id="CHEBI:37565"/>
    </ligand>
</feature>
<dbReference type="EMBL" id="CP000031">
    <property type="protein sequence ID" value="AAV93847.1"/>
    <property type="molecule type" value="Genomic_DNA"/>
</dbReference>
<dbReference type="RefSeq" id="WP_011046289.1">
    <property type="nucleotide sequence ID" value="NC_003911.12"/>
</dbReference>
<dbReference type="SMR" id="Q5LW13"/>
<dbReference type="STRING" id="246200.SPO0530"/>
<dbReference type="PaxDb" id="246200-SPO0530"/>
<dbReference type="KEGG" id="sil:SPO0530"/>
<dbReference type="eggNOG" id="COG0218">
    <property type="taxonomic scope" value="Bacteria"/>
</dbReference>
<dbReference type="HOGENOM" id="CLU_033732_2_0_5"/>
<dbReference type="OrthoDB" id="9804921at2"/>
<dbReference type="Proteomes" id="UP000001023">
    <property type="component" value="Chromosome"/>
</dbReference>
<dbReference type="GO" id="GO:0005829">
    <property type="term" value="C:cytosol"/>
    <property type="evidence" value="ECO:0007669"/>
    <property type="project" value="TreeGrafter"/>
</dbReference>
<dbReference type="GO" id="GO:0005525">
    <property type="term" value="F:GTP binding"/>
    <property type="evidence" value="ECO:0007669"/>
    <property type="project" value="UniProtKB-UniRule"/>
</dbReference>
<dbReference type="GO" id="GO:0046872">
    <property type="term" value="F:metal ion binding"/>
    <property type="evidence" value="ECO:0007669"/>
    <property type="project" value="UniProtKB-KW"/>
</dbReference>
<dbReference type="GO" id="GO:0000917">
    <property type="term" value="P:division septum assembly"/>
    <property type="evidence" value="ECO:0007669"/>
    <property type="project" value="UniProtKB-KW"/>
</dbReference>
<dbReference type="CDD" id="cd01876">
    <property type="entry name" value="YihA_EngB"/>
    <property type="match status" value="1"/>
</dbReference>
<dbReference type="Gene3D" id="3.40.50.300">
    <property type="entry name" value="P-loop containing nucleotide triphosphate hydrolases"/>
    <property type="match status" value="1"/>
</dbReference>
<dbReference type="HAMAP" id="MF_00321">
    <property type="entry name" value="GTPase_EngB"/>
    <property type="match status" value="1"/>
</dbReference>
<dbReference type="InterPro" id="IPR030393">
    <property type="entry name" value="G_ENGB_dom"/>
</dbReference>
<dbReference type="InterPro" id="IPR006073">
    <property type="entry name" value="GTP-bd"/>
</dbReference>
<dbReference type="InterPro" id="IPR019987">
    <property type="entry name" value="GTP-bd_ribosome_bio_YsxC"/>
</dbReference>
<dbReference type="InterPro" id="IPR027417">
    <property type="entry name" value="P-loop_NTPase"/>
</dbReference>
<dbReference type="NCBIfam" id="TIGR03598">
    <property type="entry name" value="GTPase_YsxC"/>
    <property type="match status" value="1"/>
</dbReference>
<dbReference type="PANTHER" id="PTHR11649:SF13">
    <property type="entry name" value="ENGB-TYPE G DOMAIN-CONTAINING PROTEIN"/>
    <property type="match status" value="1"/>
</dbReference>
<dbReference type="PANTHER" id="PTHR11649">
    <property type="entry name" value="MSS1/TRME-RELATED GTP-BINDING PROTEIN"/>
    <property type="match status" value="1"/>
</dbReference>
<dbReference type="Pfam" id="PF01926">
    <property type="entry name" value="MMR_HSR1"/>
    <property type="match status" value="1"/>
</dbReference>
<dbReference type="SUPFAM" id="SSF52540">
    <property type="entry name" value="P-loop containing nucleoside triphosphate hydrolases"/>
    <property type="match status" value="1"/>
</dbReference>
<dbReference type="PROSITE" id="PS51706">
    <property type="entry name" value="G_ENGB"/>
    <property type="match status" value="1"/>
</dbReference>